<proteinExistence type="inferred from homology"/>
<keyword id="KW-0031">Aminopeptidase</keyword>
<keyword id="KW-0963">Cytoplasm</keyword>
<keyword id="KW-0378">Hydrolase</keyword>
<keyword id="KW-0464">Manganese</keyword>
<keyword id="KW-0479">Metal-binding</keyword>
<keyword id="KW-0645">Protease</keyword>
<sequence>MEFSTQTTASLHQIKTAALAVGVFADGVLSAAAEVIDRASHGAVAAVVKSEFRGRTGGTLVLRSLAGVSAQRVVLVGLGKQAEYNARAHASAEQAFAAACVAAQVGEGVSTLAGVAIEGVPVRARARSAAIAAGAAAYHYDATFGKANRDARPRLKKIVQVVDRAASAQTQLGLREGAAIAHGMELTRTLGNLPGNVCTPAYLGNTAKKLAREFKSLKVEVLERKQVEALGMGSFLSVARGSEEPLRFIVLRHAGKPAKKDKAGPVVLVGKGITFDAGGISLKPAATMDEMKYDMCGAASVLGTFRALAELELPLDVVGLIAACENLPSGKANKPGDVVTSMSGQTIEILNTDAEGRLVLCDALTYAERFKPAAVIDIATLTGACVVALGNVNSGLFSKDDALADALLAASRQSLDPAWRLPLDDAYQDQLKSNFADIANIGGPPAGAVTAACFLSRFTKAYPWAHLDIAGTAWRGGKDKGATGRPVPLLMQYLLDQAG</sequence>
<feature type="chain" id="PRO_0000165725" description="Probable cytosol aminopeptidase">
    <location>
        <begin position="1"/>
        <end position="499"/>
    </location>
</feature>
<feature type="active site" evidence="1">
    <location>
        <position position="283"/>
    </location>
</feature>
<feature type="active site" evidence="1">
    <location>
        <position position="357"/>
    </location>
</feature>
<feature type="binding site" evidence="1">
    <location>
        <position position="271"/>
    </location>
    <ligand>
        <name>Mn(2+)</name>
        <dbReference type="ChEBI" id="CHEBI:29035"/>
        <label>2</label>
    </ligand>
</feature>
<feature type="binding site" evidence="1">
    <location>
        <position position="276"/>
    </location>
    <ligand>
        <name>Mn(2+)</name>
        <dbReference type="ChEBI" id="CHEBI:29035"/>
        <label>1</label>
    </ligand>
</feature>
<feature type="binding site" evidence="1">
    <location>
        <position position="276"/>
    </location>
    <ligand>
        <name>Mn(2+)</name>
        <dbReference type="ChEBI" id="CHEBI:29035"/>
        <label>2</label>
    </ligand>
</feature>
<feature type="binding site" evidence="1">
    <location>
        <position position="294"/>
    </location>
    <ligand>
        <name>Mn(2+)</name>
        <dbReference type="ChEBI" id="CHEBI:29035"/>
        <label>2</label>
    </ligand>
</feature>
<feature type="binding site" evidence="1">
    <location>
        <position position="353"/>
    </location>
    <ligand>
        <name>Mn(2+)</name>
        <dbReference type="ChEBI" id="CHEBI:29035"/>
        <label>1</label>
    </ligand>
</feature>
<feature type="binding site" evidence="1">
    <location>
        <position position="355"/>
    </location>
    <ligand>
        <name>Mn(2+)</name>
        <dbReference type="ChEBI" id="CHEBI:29035"/>
        <label>1</label>
    </ligand>
</feature>
<feature type="binding site" evidence="1">
    <location>
        <position position="355"/>
    </location>
    <ligand>
        <name>Mn(2+)</name>
        <dbReference type="ChEBI" id="CHEBI:29035"/>
        <label>2</label>
    </ligand>
</feature>
<comment type="function">
    <text evidence="1">Presumably involved in the processing and regular turnover of intracellular proteins. Catalyzes the removal of unsubstituted N-terminal amino acids from various peptides.</text>
</comment>
<comment type="catalytic activity">
    <reaction evidence="1">
        <text>Release of an N-terminal amino acid, Xaa-|-Yaa-, in which Xaa is preferably Leu, but may be other amino acids including Pro although not Arg or Lys, and Yaa may be Pro. Amino acid amides and methyl esters are also readily hydrolyzed, but rates on arylamides are exceedingly low.</text>
        <dbReference type="EC" id="3.4.11.1"/>
    </reaction>
</comment>
<comment type="catalytic activity">
    <reaction evidence="1">
        <text>Release of an N-terminal amino acid, preferentially leucine, but not glutamic or aspartic acids.</text>
        <dbReference type="EC" id="3.4.11.10"/>
    </reaction>
</comment>
<comment type="cofactor">
    <cofactor evidence="1">
        <name>Mn(2+)</name>
        <dbReference type="ChEBI" id="CHEBI:29035"/>
    </cofactor>
    <text evidence="1">Binds 2 manganese ions per subunit.</text>
</comment>
<comment type="subcellular location">
    <subcellularLocation>
        <location evidence="1">Cytoplasm</location>
    </subcellularLocation>
</comment>
<comment type="similarity">
    <text evidence="1">Belongs to the peptidase M17 family.</text>
</comment>
<protein>
    <recommendedName>
        <fullName evidence="1">Probable cytosol aminopeptidase</fullName>
        <ecNumber evidence="1">3.4.11.1</ecNumber>
    </recommendedName>
    <alternativeName>
        <fullName evidence="1">Leucine aminopeptidase</fullName>
        <shortName evidence="1">LAP</shortName>
        <ecNumber evidence="1">3.4.11.10</ecNumber>
    </alternativeName>
    <alternativeName>
        <fullName evidence="1">Leucyl aminopeptidase</fullName>
    </alternativeName>
</protein>
<reference key="1">
    <citation type="journal article" date="2003" name="Nat. Genet.">
        <title>Comparative analysis of the genome sequences of Bordetella pertussis, Bordetella parapertussis and Bordetella bronchiseptica.</title>
        <authorList>
            <person name="Parkhill J."/>
            <person name="Sebaihia M."/>
            <person name="Preston A."/>
            <person name="Murphy L.D."/>
            <person name="Thomson N.R."/>
            <person name="Harris D.E."/>
            <person name="Holden M.T.G."/>
            <person name="Churcher C.M."/>
            <person name="Bentley S.D."/>
            <person name="Mungall K.L."/>
            <person name="Cerdeno-Tarraga A.-M."/>
            <person name="Temple L."/>
            <person name="James K.D."/>
            <person name="Harris B."/>
            <person name="Quail M.A."/>
            <person name="Achtman M."/>
            <person name="Atkin R."/>
            <person name="Baker S."/>
            <person name="Basham D."/>
            <person name="Bason N."/>
            <person name="Cherevach I."/>
            <person name="Chillingworth T."/>
            <person name="Collins M."/>
            <person name="Cronin A."/>
            <person name="Davis P."/>
            <person name="Doggett J."/>
            <person name="Feltwell T."/>
            <person name="Goble A."/>
            <person name="Hamlin N."/>
            <person name="Hauser H."/>
            <person name="Holroyd S."/>
            <person name="Jagels K."/>
            <person name="Leather S."/>
            <person name="Moule S."/>
            <person name="Norberczak H."/>
            <person name="O'Neil S."/>
            <person name="Ormond D."/>
            <person name="Price C."/>
            <person name="Rabbinowitsch E."/>
            <person name="Rutter S."/>
            <person name="Sanders M."/>
            <person name="Saunders D."/>
            <person name="Seeger K."/>
            <person name="Sharp S."/>
            <person name="Simmonds M."/>
            <person name="Skelton J."/>
            <person name="Squares R."/>
            <person name="Squares S."/>
            <person name="Stevens K."/>
            <person name="Unwin L."/>
            <person name="Whitehead S."/>
            <person name="Barrell B.G."/>
            <person name="Maskell D.J."/>
        </authorList>
    </citation>
    <scope>NUCLEOTIDE SEQUENCE [LARGE SCALE GENOMIC DNA]</scope>
    <source>
        <strain>12822 / ATCC BAA-587 / NCTC 13253</strain>
    </source>
</reference>
<name>AMPA_BORPA</name>
<accession>Q7W5K6</accession>
<organism>
    <name type="scientific">Bordetella parapertussis (strain 12822 / ATCC BAA-587 / NCTC 13253)</name>
    <dbReference type="NCBI Taxonomy" id="257311"/>
    <lineage>
        <taxon>Bacteria</taxon>
        <taxon>Pseudomonadati</taxon>
        <taxon>Pseudomonadota</taxon>
        <taxon>Betaproteobacteria</taxon>
        <taxon>Burkholderiales</taxon>
        <taxon>Alcaligenaceae</taxon>
        <taxon>Bordetella</taxon>
    </lineage>
</organism>
<gene>
    <name evidence="1" type="primary">pepA</name>
    <name type="ordered locus">BPP3285</name>
</gene>
<dbReference type="EC" id="3.4.11.1" evidence="1"/>
<dbReference type="EC" id="3.4.11.10" evidence="1"/>
<dbReference type="EMBL" id="BX640433">
    <property type="protein sequence ID" value="CAE38570.1"/>
    <property type="molecule type" value="Genomic_DNA"/>
</dbReference>
<dbReference type="RefSeq" id="WP_010928991.1">
    <property type="nucleotide sequence ID" value="NC_002928.3"/>
</dbReference>
<dbReference type="SMR" id="Q7W5K6"/>
<dbReference type="MEROPS" id="M17.003"/>
<dbReference type="GeneID" id="93205067"/>
<dbReference type="KEGG" id="bpa:BPP3285"/>
<dbReference type="HOGENOM" id="CLU_013734_2_2_4"/>
<dbReference type="Proteomes" id="UP000001421">
    <property type="component" value="Chromosome"/>
</dbReference>
<dbReference type="GO" id="GO:0005737">
    <property type="term" value="C:cytoplasm"/>
    <property type="evidence" value="ECO:0007669"/>
    <property type="project" value="UniProtKB-SubCell"/>
</dbReference>
<dbReference type="GO" id="GO:0030145">
    <property type="term" value="F:manganese ion binding"/>
    <property type="evidence" value="ECO:0007669"/>
    <property type="project" value="UniProtKB-UniRule"/>
</dbReference>
<dbReference type="GO" id="GO:0070006">
    <property type="term" value="F:metalloaminopeptidase activity"/>
    <property type="evidence" value="ECO:0007669"/>
    <property type="project" value="InterPro"/>
</dbReference>
<dbReference type="GO" id="GO:0006508">
    <property type="term" value="P:proteolysis"/>
    <property type="evidence" value="ECO:0007669"/>
    <property type="project" value="UniProtKB-KW"/>
</dbReference>
<dbReference type="CDD" id="cd00433">
    <property type="entry name" value="Peptidase_M17"/>
    <property type="match status" value="1"/>
</dbReference>
<dbReference type="FunFam" id="3.40.630.10:FF:000004">
    <property type="entry name" value="Probable cytosol aminopeptidase"/>
    <property type="match status" value="1"/>
</dbReference>
<dbReference type="Gene3D" id="3.40.220.10">
    <property type="entry name" value="Leucine Aminopeptidase, subunit E, domain 1"/>
    <property type="match status" value="1"/>
</dbReference>
<dbReference type="Gene3D" id="3.40.630.10">
    <property type="entry name" value="Zn peptidases"/>
    <property type="match status" value="1"/>
</dbReference>
<dbReference type="HAMAP" id="MF_00181">
    <property type="entry name" value="Cytosol_peptidase_M17"/>
    <property type="match status" value="1"/>
</dbReference>
<dbReference type="InterPro" id="IPR011356">
    <property type="entry name" value="Leucine_aapep/pepB"/>
</dbReference>
<dbReference type="InterPro" id="IPR043472">
    <property type="entry name" value="Macro_dom-like"/>
</dbReference>
<dbReference type="InterPro" id="IPR000819">
    <property type="entry name" value="Peptidase_M17_C"/>
</dbReference>
<dbReference type="InterPro" id="IPR023042">
    <property type="entry name" value="Peptidase_M17_leu_NH2_pept"/>
</dbReference>
<dbReference type="InterPro" id="IPR008283">
    <property type="entry name" value="Peptidase_M17_N"/>
</dbReference>
<dbReference type="NCBIfam" id="NF002074">
    <property type="entry name" value="PRK00913.1-4"/>
    <property type="match status" value="1"/>
</dbReference>
<dbReference type="PANTHER" id="PTHR11963:SF23">
    <property type="entry name" value="CYTOSOL AMINOPEPTIDASE"/>
    <property type="match status" value="1"/>
</dbReference>
<dbReference type="PANTHER" id="PTHR11963">
    <property type="entry name" value="LEUCINE AMINOPEPTIDASE-RELATED"/>
    <property type="match status" value="1"/>
</dbReference>
<dbReference type="Pfam" id="PF00883">
    <property type="entry name" value="Peptidase_M17"/>
    <property type="match status" value="1"/>
</dbReference>
<dbReference type="Pfam" id="PF02789">
    <property type="entry name" value="Peptidase_M17_N"/>
    <property type="match status" value="1"/>
</dbReference>
<dbReference type="PRINTS" id="PR00481">
    <property type="entry name" value="LAMNOPPTDASE"/>
</dbReference>
<dbReference type="SUPFAM" id="SSF52949">
    <property type="entry name" value="Macro domain-like"/>
    <property type="match status" value="1"/>
</dbReference>
<dbReference type="SUPFAM" id="SSF53187">
    <property type="entry name" value="Zn-dependent exopeptidases"/>
    <property type="match status" value="1"/>
</dbReference>
<dbReference type="PROSITE" id="PS00631">
    <property type="entry name" value="CYTOSOL_AP"/>
    <property type="match status" value="1"/>
</dbReference>
<evidence type="ECO:0000255" key="1">
    <source>
        <dbReference type="HAMAP-Rule" id="MF_00181"/>
    </source>
</evidence>